<comment type="catalytic activity">
    <reaction evidence="1">
        <text>L-histidine = trans-urocanate + NH4(+)</text>
        <dbReference type="Rhea" id="RHEA:21232"/>
        <dbReference type="ChEBI" id="CHEBI:17771"/>
        <dbReference type="ChEBI" id="CHEBI:28938"/>
        <dbReference type="ChEBI" id="CHEBI:57595"/>
        <dbReference type="EC" id="4.3.1.3"/>
    </reaction>
</comment>
<comment type="pathway">
    <text evidence="1">Amino-acid degradation; L-histidine degradation into L-glutamate; N-formimidoyl-L-glutamate from L-histidine: step 1/3.</text>
</comment>
<comment type="subcellular location">
    <subcellularLocation>
        <location evidence="1">Cytoplasm</location>
    </subcellularLocation>
</comment>
<comment type="PTM">
    <text evidence="1">Contains an active site 4-methylidene-imidazol-5-one (MIO), which is formed autocatalytically by cyclization and dehydration of residues Ala-Ser-Gly.</text>
</comment>
<comment type="similarity">
    <text evidence="1">Belongs to the PAL/histidase family.</text>
</comment>
<proteinExistence type="inferred from homology"/>
<dbReference type="EC" id="4.3.1.3" evidence="1"/>
<dbReference type="EMBL" id="CP000362">
    <property type="protein sequence ID" value="ABG33151.1"/>
    <property type="molecule type" value="Genomic_DNA"/>
</dbReference>
<dbReference type="RefSeq" id="WP_011569762.1">
    <property type="nucleotide sequence ID" value="NC_008209.1"/>
</dbReference>
<dbReference type="SMR" id="Q162E2"/>
<dbReference type="STRING" id="375451.RD1_3678"/>
<dbReference type="KEGG" id="rde:RD1_3678"/>
<dbReference type="eggNOG" id="COG2986">
    <property type="taxonomic scope" value="Bacteria"/>
</dbReference>
<dbReference type="HOGENOM" id="CLU_014801_4_0_5"/>
<dbReference type="OrthoDB" id="9806955at2"/>
<dbReference type="UniPathway" id="UPA00379">
    <property type="reaction ID" value="UER00549"/>
</dbReference>
<dbReference type="Proteomes" id="UP000007029">
    <property type="component" value="Chromosome"/>
</dbReference>
<dbReference type="GO" id="GO:0005737">
    <property type="term" value="C:cytoplasm"/>
    <property type="evidence" value="ECO:0007669"/>
    <property type="project" value="UniProtKB-SubCell"/>
</dbReference>
<dbReference type="GO" id="GO:0004397">
    <property type="term" value="F:histidine ammonia-lyase activity"/>
    <property type="evidence" value="ECO:0007669"/>
    <property type="project" value="UniProtKB-UniRule"/>
</dbReference>
<dbReference type="GO" id="GO:0019556">
    <property type="term" value="P:L-histidine catabolic process to glutamate and formamide"/>
    <property type="evidence" value="ECO:0007669"/>
    <property type="project" value="UniProtKB-UniPathway"/>
</dbReference>
<dbReference type="GO" id="GO:0019557">
    <property type="term" value="P:L-histidine catabolic process to glutamate and formate"/>
    <property type="evidence" value="ECO:0007669"/>
    <property type="project" value="UniProtKB-UniPathway"/>
</dbReference>
<dbReference type="CDD" id="cd00332">
    <property type="entry name" value="PAL-HAL"/>
    <property type="match status" value="1"/>
</dbReference>
<dbReference type="FunFam" id="1.10.275.10:FF:000005">
    <property type="entry name" value="Histidine ammonia-lyase"/>
    <property type="match status" value="1"/>
</dbReference>
<dbReference type="FunFam" id="1.20.200.10:FF:000003">
    <property type="entry name" value="Histidine ammonia-lyase"/>
    <property type="match status" value="1"/>
</dbReference>
<dbReference type="Gene3D" id="1.20.200.10">
    <property type="entry name" value="Fumarase/aspartase (Central domain)"/>
    <property type="match status" value="1"/>
</dbReference>
<dbReference type="Gene3D" id="1.10.275.10">
    <property type="entry name" value="Fumarase/aspartase (N-terminal domain)"/>
    <property type="match status" value="1"/>
</dbReference>
<dbReference type="HAMAP" id="MF_00229">
    <property type="entry name" value="His_ammonia_lyase"/>
    <property type="match status" value="1"/>
</dbReference>
<dbReference type="InterPro" id="IPR001106">
    <property type="entry name" value="Aromatic_Lyase"/>
</dbReference>
<dbReference type="InterPro" id="IPR024083">
    <property type="entry name" value="Fumarase/histidase_N"/>
</dbReference>
<dbReference type="InterPro" id="IPR005921">
    <property type="entry name" value="HutH"/>
</dbReference>
<dbReference type="InterPro" id="IPR008948">
    <property type="entry name" value="L-Aspartase-like"/>
</dbReference>
<dbReference type="InterPro" id="IPR022313">
    <property type="entry name" value="Phe/His_NH3-lyase_AS"/>
</dbReference>
<dbReference type="NCBIfam" id="TIGR01225">
    <property type="entry name" value="hutH"/>
    <property type="match status" value="1"/>
</dbReference>
<dbReference type="NCBIfam" id="NF006871">
    <property type="entry name" value="PRK09367.1"/>
    <property type="match status" value="1"/>
</dbReference>
<dbReference type="PANTHER" id="PTHR10362">
    <property type="entry name" value="HISTIDINE AMMONIA-LYASE"/>
    <property type="match status" value="1"/>
</dbReference>
<dbReference type="Pfam" id="PF00221">
    <property type="entry name" value="Lyase_aromatic"/>
    <property type="match status" value="1"/>
</dbReference>
<dbReference type="SUPFAM" id="SSF48557">
    <property type="entry name" value="L-aspartase-like"/>
    <property type="match status" value="1"/>
</dbReference>
<dbReference type="PROSITE" id="PS00488">
    <property type="entry name" value="PAL_HISTIDASE"/>
    <property type="match status" value="1"/>
</dbReference>
<accession>Q162E2</accession>
<keyword id="KW-0963">Cytoplasm</keyword>
<keyword id="KW-0369">Histidine metabolism</keyword>
<keyword id="KW-0456">Lyase</keyword>
<keyword id="KW-1185">Reference proteome</keyword>
<gene>
    <name evidence="1" type="primary">hutH</name>
    <name type="ordered locus">RD1_3678</name>
</gene>
<name>HUTH_ROSDO</name>
<feature type="chain" id="PRO_0000336588" description="Histidine ammonia-lyase">
    <location>
        <begin position="1"/>
        <end position="513"/>
    </location>
</feature>
<feature type="modified residue" description="2,3-didehydroalanine (Ser)" evidence="1">
    <location>
        <position position="143"/>
    </location>
</feature>
<feature type="cross-link" description="5-imidazolinone (Ala-Gly)" evidence="1">
    <location>
        <begin position="142"/>
        <end position="144"/>
    </location>
</feature>
<reference key="1">
    <citation type="journal article" date="2007" name="J. Bacteriol.">
        <title>The complete genome sequence of Roseobacter denitrificans reveals a mixotrophic rather than photosynthetic metabolism.</title>
        <authorList>
            <person name="Swingley W.D."/>
            <person name="Sadekar S."/>
            <person name="Mastrian S.D."/>
            <person name="Matthies H.J."/>
            <person name="Hao J."/>
            <person name="Ramos H."/>
            <person name="Acharya C.R."/>
            <person name="Conrad A.L."/>
            <person name="Taylor H.L."/>
            <person name="Dejesa L.C."/>
            <person name="Shah M.K."/>
            <person name="O'Huallachain M.E."/>
            <person name="Lince M.T."/>
            <person name="Blankenship R.E."/>
            <person name="Beatty J.T."/>
            <person name="Touchman J.W."/>
        </authorList>
    </citation>
    <scope>NUCLEOTIDE SEQUENCE [LARGE SCALE GENOMIC DNA]</scope>
    <source>
        <strain>ATCC 33942 / OCh 114</strain>
    </source>
</reference>
<sequence length="513" mass="52832">MTLTLTPGAATLAQLQDIWANNRAVTLCPSAHAGIKAAQALVAKAAAGDDAVYGVNTGFGKLASVKIAAKDVATLQRNLILSHCCGVGEPLDAATTRLMMVLKLLSLGRGASGVAMTTLEIIENMLARGVTPVIPSQGSVGASGDLAPLAHMAAAMIGEGEAVFEGTRMAAGDALRRAGITPIVLGAKEGLALINGTQFSTACALVGLWGAWRNAATCVLTCALSTDAIMGSTAPLQDAIHTLRGHAGQIAVARAQRALMAGSQIRESHVEGDTRVQDPYCIRCQPQVTGAAMDILHFAGRTLEIEANAVTDNPLVLVEDELIVSGGNFHAEPVGFAADQIAVAVSELGAIAQRRVALMVDPTLSFDLPPFLTPDPGLNSGLMIAEVTTAALMSENKHLANPCTTDSTPTSANQEDHVSMAAHAARRLLRMNANLNVILGVEAMCGAQGIEFRAPLETSAPLKAAMAVLRAHVPTIAEDRYMAPSIEAASALVANGTLAACVDLPAFVKGEAA</sequence>
<evidence type="ECO:0000255" key="1">
    <source>
        <dbReference type="HAMAP-Rule" id="MF_00229"/>
    </source>
</evidence>
<protein>
    <recommendedName>
        <fullName evidence="1">Histidine ammonia-lyase</fullName>
        <shortName evidence="1">Histidase</shortName>
        <ecNumber evidence="1">4.3.1.3</ecNumber>
    </recommendedName>
</protein>
<organism>
    <name type="scientific">Roseobacter denitrificans (strain ATCC 33942 / OCh 114)</name>
    <name type="common">Erythrobacter sp. (strain OCh 114)</name>
    <name type="synonym">Roseobacter denitrificans</name>
    <dbReference type="NCBI Taxonomy" id="375451"/>
    <lineage>
        <taxon>Bacteria</taxon>
        <taxon>Pseudomonadati</taxon>
        <taxon>Pseudomonadota</taxon>
        <taxon>Alphaproteobacteria</taxon>
        <taxon>Rhodobacterales</taxon>
        <taxon>Roseobacteraceae</taxon>
        <taxon>Roseobacter</taxon>
    </lineage>
</organism>